<proteinExistence type="inferred from homology"/>
<keyword id="KW-1185">Reference proteome</keyword>
<comment type="similarity">
    <text evidence="1">Belongs to the SlyX family.</text>
</comment>
<gene>
    <name evidence="1" type="primary">slyX</name>
    <name type="ordered locus">Sden_2911</name>
</gene>
<sequence length="70" mass="8126">MQELQQKIEDLETKLAFQELSVEELNQEVIKLNQLVAKQQQQISLMVNKLMDIEPSNMASESEETPPPHY</sequence>
<organism>
    <name type="scientific">Shewanella denitrificans (strain OS217 / ATCC BAA-1090 / DSM 15013)</name>
    <dbReference type="NCBI Taxonomy" id="318161"/>
    <lineage>
        <taxon>Bacteria</taxon>
        <taxon>Pseudomonadati</taxon>
        <taxon>Pseudomonadota</taxon>
        <taxon>Gammaproteobacteria</taxon>
        <taxon>Alteromonadales</taxon>
        <taxon>Shewanellaceae</taxon>
        <taxon>Shewanella</taxon>
    </lineage>
</organism>
<evidence type="ECO:0000255" key="1">
    <source>
        <dbReference type="HAMAP-Rule" id="MF_00715"/>
    </source>
</evidence>
<feature type="chain" id="PRO_1000045734" description="Protein SlyX homolog">
    <location>
        <begin position="1"/>
        <end position="70"/>
    </location>
</feature>
<name>SLYX_SHEDO</name>
<reference key="1">
    <citation type="submission" date="2006-03" db="EMBL/GenBank/DDBJ databases">
        <title>Complete sequence of Shewanella denitrificans OS217.</title>
        <authorList>
            <consortium name="US DOE Joint Genome Institute"/>
            <person name="Copeland A."/>
            <person name="Lucas S."/>
            <person name="Lapidus A."/>
            <person name="Barry K."/>
            <person name="Detter J.C."/>
            <person name="Glavina del Rio T."/>
            <person name="Hammon N."/>
            <person name="Israni S."/>
            <person name="Dalin E."/>
            <person name="Tice H."/>
            <person name="Pitluck S."/>
            <person name="Brettin T."/>
            <person name="Bruce D."/>
            <person name="Han C."/>
            <person name="Tapia R."/>
            <person name="Gilna P."/>
            <person name="Kiss H."/>
            <person name="Schmutz J."/>
            <person name="Larimer F."/>
            <person name="Land M."/>
            <person name="Hauser L."/>
            <person name="Kyrpides N."/>
            <person name="Lykidis A."/>
            <person name="Richardson P."/>
        </authorList>
    </citation>
    <scope>NUCLEOTIDE SEQUENCE [LARGE SCALE GENOMIC DNA]</scope>
    <source>
        <strain>OS217 / ATCC BAA-1090 / DSM 15013</strain>
    </source>
</reference>
<dbReference type="EMBL" id="CP000302">
    <property type="protein sequence ID" value="ABE56189.1"/>
    <property type="molecule type" value="Genomic_DNA"/>
</dbReference>
<dbReference type="RefSeq" id="WP_011497338.1">
    <property type="nucleotide sequence ID" value="NC_007954.1"/>
</dbReference>
<dbReference type="SMR" id="Q12K37"/>
<dbReference type="STRING" id="318161.Sden_2911"/>
<dbReference type="KEGG" id="sdn:Sden_2911"/>
<dbReference type="eggNOG" id="COG2900">
    <property type="taxonomic scope" value="Bacteria"/>
</dbReference>
<dbReference type="HOGENOM" id="CLU_180796_4_2_6"/>
<dbReference type="OrthoDB" id="5771733at2"/>
<dbReference type="Proteomes" id="UP000001982">
    <property type="component" value="Chromosome"/>
</dbReference>
<dbReference type="Gene3D" id="1.20.5.300">
    <property type="match status" value="1"/>
</dbReference>
<dbReference type="HAMAP" id="MF_00715">
    <property type="entry name" value="SlyX"/>
    <property type="match status" value="1"/>
</dbReference>
<dbReference type="InterPro" id="IPR007236">
    <property type="entry name" value="SlyX"/>
</dbReference>
<dbReference type="PANTHER" id="PTHR36508">
    <property type="entry name" value="PROTEIN SLYX"/>
    <property type="match status" value="1"/>
</dbReference>
<dbReference type="PANTHER" id="PTHR36508:SF1">
    <property type="entry name" value="PROTEIN SLYX"/>
    <property type="match status" value="1"/>
</dbReference>
<dbReference type="Pfam" id="PF04102">
    <property type="entry name" value="SlyX"/>
    <property type="match status" value="1"/>
</dbReference>
<accession>Q12K37</accession>
<protein>
    <recommendedName>
        <fullName evidence="1">Protein SlyX homolog</fullName>
    </recommendedName>
</protein>